<accession>P67708</accession>
<accession>O26079</accession>
<feature type="chain" id="PRO_0000105546" description="Flagellar hook-basal body complex protein FliE">
    <location>
        <begin position="1"/>
        <end position="109"/>
    </location>
</feature>
<feature type="region of interest" description="Disordered" evidence="2">
    <location>
        <begin position="1"/>
        <end position="38"/>
    </location>
</feature>
<feature type="compositionally biased region" description="Basic and acidic residues" evidence="2">
    <location>
        <begin position="19"/>
        <end position="38"/>
    </location>
</feature>
<name>FLIE_HELPY</name>
<comment type="subcellular location">
    <subcellularLocation>
        <location evidence="1">Bacterial flagellum basal body</location>
    </subcellularLocation>
</comment>
<comment type="similarity">
    <text evidence="3">Belongs to the FliE family.</text>
</comment>
<proteinExistence type="inferred from homology"/>
<protein>
    <recommendedName>
        <fullName>Flagellar hook-basal body complex protein FliE</fullName>
    </recommendedName>
</protein>
<keyword id="KW-0975">Bacterial flagellum</keyword>
<keyword id="KW-1185">Reference proteome</keyword>
<dbReference type="EMBL" id="AE000511">
    <property type="protein sequence ID" value="AAD08597.1"/>
    <property type="molecule type" value="Genomic_DNA"/>
</dbReference>
<dbReference type="PIR" id="E64714">
    <property type="entry name" value="E64714"/>
</dbReference>
<dbReference type="RefSeq" id="NP_208348.1">
    <property type="nucleotide sequence ID" value="NC_000915.1"/>
</dbReference>
<dbReference type="RefSeq" id="WP_001147918.1">
    <property type="nucleotide sequence ID" value="NC_018939.1"/>
</dbReference>
<dbReference type="SMR" id="P67708"/>
<dbReference type="IntAct" id="P67708">
    <property type="interactions" value="3"/>
</dbReference>
<dbReference type="STRING" id="85962.HP_1557"/>
<dbReference type="PaxDb" id="85962-C694_08070"/>
<dbReference type="DNASU" id="899734"/>
<dbReference type="EnsemblBacteria" id="AAD08597">
    <property type="protein sequence ID" value="AAD08597"/>
    <property type="gene ID" value="HP_1557"/>
</dbReference>
<dbReference type="KEGG" id="heo:C694_08070"/>
<dbReference type="KEGG" id="hpy:HP_1557"/>
<dbReference type="PATRIC" id="fig|85962.47.peg.1674"/>
<dbReference type="eggNOG" id="COG1677">
    <property type="taxonomic scope" value="Bacteria"/>
</dbReference>
<dbReference type="InParanoid" id="P67708"/>
<dbReference type="OrthoDB" id="285952at2"/>
<dbReference type="PhylomeDB" id="P67708"/>
<dbReference type="Proteomes" id="UP000000429">
    <property type="component" value="Chromosome"/>
</dbReference>
<dbReference type="GO" id="GO:0009425">
    <property type="term" value="C:bacterial-type flagellum basal body"/>
    <property type="evidence" value="ECO:0007669"/>
    <property type="project" value="UniProtKB-SubCell"/>
</dbReference>
<dbReference type="GO" id="GO:0003774">
    <property type="term" value="F:cytoskeletal motor activity"/>
    <property type="evidence" value="ECO:0007669"/>
    <property type="project" value="InterPro"/>
</dbReference>
<dbReference type="GO" id="GO:0005198">
    <property type="term" value="F:structural molecule activity"/>
    <property type="evidence" value="ECO:0007669"/>
    <property type="project" value="InterPro"/>
</dbReference>
<dbReference type="GO" id="GO:0044780">
    <property type="term" value="P:bacterial-type flagellum assembly"/>
    <property type="evidence" value="ECO:0000318"/>
    <property type="project" value="GO_Central"/>
</dbReference>
<dbReference type="GO" id="GO:0071973">
    <property type="term" value="P:bacterial-type flagellum-dependent cell motility"/>
    <property type="evidence" value="ECO:0007669"/>
    <property type="project" value="InterPro"/>
</dbReference>
<dbReference type="HAMAP" id="MF_00724">
    <property type="entry name" value="FliE"/>
    <property type="match status" value="1"/>
</dbReference>
<dbReference type="InterPro" id="IPR001624">
    <property type="entry name" value="FliE"/>
</dbReference>
<dbReference type="NCBIfam" id="TIGR00205">
    <property type="entry name" value="fliE"/>
    <property type="match status" value="1"/>
</dbReference>
<dbReference type="PANTHER" id="PTHR34653">
    <property type="match status" value="1"/>
</dbReference>
<dbReference type="PANTHER" id="PTHR34653:SF1">
    <property type="entry name" value="FLAGELLAR HOOK-BASAL BODY COMPLEX PROTEIN FLIE"/>
    <property type="match status" value="1"/>
</dbReference>
<dbReference type="Pfam" id="PF02049">
    <property type="entry name" value="FliE"/>
    <property type="match status" value="1"/>
</dbReference>
<dbReference type="PRINTS" id="PR01006">
    <property type="entry name" value="FLGHOOKFLIE"/>
</dbReference>
<organism>
    <name type="scientific">Helicobacter pylori (strain ATCC 700392 / 26695)</name>
    <name type="common">Campylobacter pylori</name>
    <dbReference type="NCBI Taxonomy" id="85962"/>
    <lineage>
        <taxon>Bacteria</taxon>
        <taxon>Pseudomonadati</taxon>
        <taxon>Campylobacterota</taxon>
        <taxon>Epsilonproteobacteria</taxon>
        <taxon>Campylobacterales</taxon>
        <taxon>Helicobacteraceae</taxon>
        <taxon>Helicobacter</taxon>
    </lineage>
</organism>
<evidence type="ECO:0000250" key="1"/>
<evidence type="ECO:0000256" key="2">
    <source>
        <dbReference type="SAM" id="MobiDB-lite"/>
    </source>
</evidence>
<evidence type="ECO:0000305" key="3"/>
<sequence>MQAIHNDKSLLSPFSELNTDNRTKREESGSTFKEQKGGEFSKLLKQSINELNNTQEQSDKALADMATGQIKDLHQAAIAIGKAETSMKLMLEVRNKAISAYKELLRTQI</sequence>
<reference key="1">
    <citation type="journal article" date="1997" name="Nature">
        <title>The complete genome sequence of the gastric pathogen Helicobacter pylori.</title>
        <authorList>
            <person name="Tomb J.-F."/>
            <person name="White O."/>
            <person name="Kerlavage A.R."/>
            <person name="Clayton R.A."/>
            <person name="Sutton G.G."/>
            <person name="Fleischmann R.D."/>
            <person name="Ketchum K.A."/>
            <person name="Klenk H.-P."/>
            <person name="Gill S.R."/>
            <person name="Dougherty B.A."/>
            <person name="Nelson K.E."/>
            <person name="Quackenbush J."/>
            <person name="Zhou L."/>
            <person name="Kirkness E.F."/>
            <person name="Peterson S.N."/>
            <person name="Loftus B.J."/>
            <person name="Richardson D.L."/>
            <person name="Dodson R.J."/>
            <person name="Khalak H.G."/>
            <person name="Glodek A."/>
            <person name="McKenney K."/>
            <person name="FitzGerald L.M."/>
            <person name="Lee N."/>
            <person name="Adams M.D."/>
            <person name="Hickey E.K."/>
            <person name="Berg D.E."/>
            <person name="Gocayne J.D."/>
            <person name="Utterback T.R."/>
            <person name="Peterson J.D."/>
            <person name="Kelley J.M."/>
            <person name="Cotton M.D."/>
            <person name="Weidman J.F."/>
            <person name="Fujii C."/>
            <person name="Bowman C."/>
            <person name="Watthey L."/>
            <person name="Wallin E."/>
            <person name="Hayes W.S."/>
            <person name="Borodovsky M."/>
            <person name="Karp P.D."/>
            <person name="Smith H.O."/>
            <person name="Fraser C.M."/>
            <person name="Venter J.C."/>
        </authorList>
    </citation>
    <scope>NUCLEOTIDE SEQUENCE [LARGE SCALE GENOMIC DNA]</scope>
    <source>
        <strain>ATCC 700392 / 26695</strain>
    </source>
</reference>
<gene>
    <name type="primary">fliE</name>
    <name type="ordered locus">HP_1557</name>
</gene>